<dbReference type="EC" id="4.1.1.49" evidence="1"/>
<dbReference type="EMBL" id="CP000557">
    <property type="protein sequence ID" value="ABO68096.1"/>
    <property type="molecule type" value="Genomic_DNA"/>
</dbReference>
<dbReference type="RefSeq" id="WP_008880953.1">
    <property type="nucleotide sequence ID" value="NC_009328.1"/>
</dbReference>
<dbReference type="SMR" id="A4IRZ2"/>
<dbReference type="KEGG" id="gtn:GTNG_2751"/>
<dbReference type="eggNOG" id="COG1866">
    <property type="taxonomic scope" value="Bacteria"/>
</dbReference>
<dbReference type="HOGENOM" id="CLU_018247_0_1_9"/>
<dbReference type="UniPathway" id="UPA00138"/>
<dbReference type="Proteomes" id="UP000001578">
    <property type="component" value="Chromosome"/>
</dbReference>
<dbReference type="GO" id="GO:0005829">
    <property type="term" value="C:cytosol"/>
    <property type="evidence" value="ECO:0007669"/>
    <property type="project" value="TreeGrafter"/>
</dbReference>
<dbReference type="GO" id="GO:0005524">
    <property type="term" value="F:ATP binding"/>
    <property type="evidence" value="ECO:0007669"/>
    <property type="project" value="UniProtKB-UniRule"/>
</dbReference>
<dbReference type="GO" id="GO:0046872">
    <property type="term" value="F:metal ion binding"/>
    <property type="evidence" value="ECO:0007669"/>
    <property type="project" value="UniProtKB-KW"/>
</dbReference>
<dbReference type="GO" id="GO:0004612">
    <property type="term" value="F:phosphoenolpyruvate carboxykinase (ATP) activity"/>
    <property type="evidence" value="ECO:0007669"/>
    <property type="project" value="UniProtKB-UniRule"/>
</dbReference>
<dbReference type="GO" id="GO:0006094">
    <property type="term" value="P:gluconeogenesis"/>
    <property type="evidence" value="ECO:0007669"/>
    <property type="project" value="UniProtKB-UniRule"/>
</dbReference>
<dbReference type="CDD" id="cd00484">
    <property type="entry name" value="PEPCK_ATP"/>
    <property type="match status" value="1"/>
</dbReference>
<dbReference type="FunFam" id="2.170.8.10:FF:000001">
    <property type="entry name" value="Phosphoenolpyruvate carboxykinase (ATP)"/>
    <property type="match status" value="1"/>
</dbReference>
<dbReference type="FunFam" id="3.40.449.10:FF:000001">
    <property type="entry name" value="Phosphoenolpyruvate carboxykinase (ATP)"/>
    <property type="match status" value="1"/>
</dbReference>
<dbReference type="Gene3D" id="3.90.228.20">
    <property type="match status" value="1"/>
</dbReference>
<dbReference type="Gene3D" id="3.40.449.10">
    <property type="entry name" value="Phosphoenolpyruvate Carboxykinase, domain 1"/>
    <property type="match status" value="1"/>
</dbReference>
<dbReference type="Gene3D" id="2.170.8.10">
    <property type="entry name" value="Phosphoenolpyruvate Carboxykinase, domain 2"/>
    <property type="match status" value="1"/>
</dbReference>
<dbReference type="HAMAP" id="MF_00453">
    <property type="entry name" value="PEPCK_ATP"/>
    <property type="match status" value="1"/>
</dbReference>
<dbReference type="InterPro" id="IPR001272">
    <property type="entry name" value="PEP_carboxykinase_ATP"/>
</dbReference>
<dbReference type="InterPro" id="IPR013035">
    <property type="entry name" value="PEP_carboxykinase_C"/>
</dbReference>
<dbReference type="InterPro" id="IPR008210">
    <property type="entry name" value="PEP_carboxykinase_N"/>
</dbReference>
<dbReference type="NCBIfam" id="TIGR00224">
    <property type="entry name" value="pckA"/>
    <property type="match status" value="1"/>
</dbReference>
<dbReference type="NCBIfam" id="NF006820">
    <property type="entry name" value="PRK09344.1-2"/>
    <property type="match status" value="1"/>
</dbReference>
<dbReference type="NCBIfam" id="NF006821">
    <property type="entry name" value="PRK09344.1-3"/>
    <property type="match status" value="1"/>
</dbReference>
<dbReference type="PANTHER" id="PTHR30031:SF0">
    <property type="entry name" value="PHOSPHOENOLPYRUVATE CARBOXYKINASE (ATP)"/>
    <property type="match status" value="1"/>
</dbReference>
<dbReference type="PANTHER" id="PTHR30031">
    <property type="entry name" value="PHOSPHOENOLPYRUVATE CARBOXYKINASE ATP"/>
    <property type="match status" value="1"/>
</dbReference>
<dbReference type="Pfam" id="PF01293">
    <property type="entry name" value="PEPCK_ATP"/>
    <property type="match status" value="1"/>
</dbReference>
<dbReference type="PIRSF" id="PIRSF006294">
    <property type="entry name" value="PEP_crbxkin"/>
    <property type="match status" value="1"/>
</dbReference>
<dbReference type="SUPFAM" id="SSF68923">
    <property type="entry name" value="PEP carboxykinase N-terminal domain"/>
    <property type="match status" value="1"/>
</dbReference>
<dbReference type="SUPFAM" id="SSF53795">
    <property type="entry name" value="PEP carboxykinase-like"/>
    <property type="match status" value="1"/>
</dbReference>
<accession>A4IRZ2</accession>
<comment type="function">
    <text evidence="1">Involved in the gluconeogenesis. Catalyzes the conversion of oxaloacetate (OAA) to phosphoenolpyruvate (PEP) through direct phosphoryl transfer between the nucleoside triphosphate and OAA.</text>
</comment>
<comment type="catalytic activity">
    <reaction evidence="1">
        <text>oxaloacetate + ATP = phosphoenolpyruvate + ADP + CO2</text>
        <dbReference type="Rhea" id="RHEA:18617"/>
        <dbReference type="ChEBI" id="CHEBI:16452"/>
        <dbReference type="ChEBI" id="CHEBI:16526"/>
        <dbReference type="ChEBI" id="CHEBI:30616"/>
        <dbReference type="ChEBI" id="CHEBI:58702"/>
        <dbReference type="ChEBI" id="CHEBI:456216"/>
        <dbReference type="EC" id="4.1.1.49"/>
    </reaction>
</comment>
<comment type="cofactor">
    <cofactor evidence="1">
        <name>Mn(2+)</name>
        <dbReference type="ChEBI" id="CHEBI:29035"/>
    </cofactor>
    <text evidence="1">Binds 1 Mn(2+) ion per subunit.</text>
</comment>
<comment type="pathway">
    <text evidence="1">Carbohydrate biosynthesis; gluconeogenesis.</text>
</comment>
<comment type="subcellular location">
    <subcellularLocation>
        <location evidence="1">Cytoplasm</location>
    </subcellularLocation>
</comment>
<comment type="similarity">
    <text evidence="1">Belongs to the phosphoenolpyruvate carboxykinase (ATP) family.</text>
</comment>
<keyword id="KW-0067">ATP-binding</keyword>
<keyword id="KW-0963">Cytoplasm</keyword>
<keyword id="KW-0210">Decarboxylase</keyword>
<keyword id="KW-0312">Gluconeogenesis</keyword>
<keyword id="KW-0456">Lyase</keyword>
<keyword id="KW-0464">Manganese</keyword>
<keyword id="KW-0479">Metal-binding</keyword>
<keyword id="KW-0547">Nucleotide-binding</keyword>
<evidence type="ECO:0000255" key="1">
    <source>
        <dbReference type="HAMAP-Rule" id="MF_00453"/>
    </source>
</evidence>
<proteinExistence type="inferred from homology"/>
<organism>
    <name type="scientific">Geobacillus thermodenitrificans (strain NG80-2)</name>
    <dbReference type="NCBI Taxonomy" id="420246"/>
    <lineage>
        <taxon>Bacteria</taxon>
        <taxon>Bacillati</taxon>
        <taxon>Bacillota</taxon>
        <taxon>Bacilli</taxon>
        <taxon>Bacillales</taxon>
        <taxon>Anoxybacillaceae</taxon>
        <taxon>Geobacillus</taxon>
    </lineage>
</organism>
<gene>
    <name evidence="1" type="primary">pckA</name>
    <name type="ordered locus">GTNG_2751</name>
</gene>
<feature type="chain" id="PRO_1000026326" description="Phosphoenolpyruvate carboxykinase (ATP)">
    <location>
        <begin position="1"/>
        <end position="528"/>
    </location>
</feature>
<feature type="binding site" evidence="1">
    <location>
        <position position="56"/>
    </location>
    <ligand>
        <name>substrate</name>
    </ligand>
</feature>
<feature type="binding site" evidence="1">
    <location>
        <position position="192"/>
    </location>
    <ligand>
        <name>substrate</name>
    </ligand>
</feature>
<feature type="binding site" evidence="1">
    <location>
        <position position="198"/>
    </location>
    <ligand>
        <name>ATP</name>
        <dbReference type="ChEBI" id="CHEBI:30616"/>
    </ligand>
</feature>
<feature type="binding site" evidence="1">
    <location>
        <position position="198"/>
    </location>
    <ligand>
        <name>Mn(2+)</name>
        <dbReference type="ChEBI" id="CHEBI:29035"/>
    </ligand>
</feature>
<feature type="binding site" evidence="1">
    <location>
        <position position="198"/>
    </location>
    <ligand>
        <name>substrate</name>
    </ligand>
</feature>
<feature type="binding site" evidence="1">
    <location>
        <position position="217"/>
    </location>
    <ligand>
        <name>ATP</name>
        <dbReference type="ChEBI" id="CHEBI:30616"/>
    </ligand>
</feature>
<feature type="binding site" evidence="1">
    <location>
        <position position="217"/>
    </location>
    <ligand>
        <name>Mn(2+)</name>
        <dbReference type="ChEBI" id="CHEBI:29035"/>
    </ligand>
</feature>
<feature type="binding site" evidence="1">
    <location>
        <begin position="233"/>
        <end position="241"/>
    </location>
    <ligand>
        <name>ATP</name>
        <dbReference type="ChEBI" id="CHEBI:30616"/>
    </ligand>
</feature>
<feature type="binding site" evidence="1">
    <location>
        <position position="254"/>
    </location>
    <ligand>
        <name>Mn(2+)</name>
        <dbReference type="ChEBI" id="CHEBI:29035"/>
    </ligand>
</feature>
<feature type="binding site" evidence="1">
    <location>
        <position position="282"/>
    </location>
    <ligand>
        <name>ATP</name>
        <dbReference type="ChEBI" id="CHEBI:30616"/>
    </ligand>
</feature>
<feature type="binding site" evidence="1">
    <location>
        <position position="319"/>
    </location>
    <ligand>
        <name>ATP</name>
        <dbReference type="ChEBI" id="CHEBI:30616"/>
    </ligand>
</feature>
<feature type="binding site" evidence="1">
    <location>
        <position position="319"/>
    </location>
    <ligand>
        <name>substrate</name>
    </ligand>
</feature>
<feature type="binding site" evidence="1">
    <location>
        <position position="444"/>
    </location>
    <ligand>
        <name>ATP</name>
        <dbReference type="ChEBI" id="CHEBI:30616"/>
    </ligand>
</feature>
<name>PCKA_GEOTN</name>
<protein>
    <recommendedName>
        <fullName evidence="1">Phosphoenolpyruvate carboxykinase (ATP)</fullName>
        <shortName evidence="1">PCK</shortName>
        <shortName evidence="1">PEP carboxykinase</shortName>
        <shortName evidence="1">PEPCK</shortName>
        <ecNumber evidence="1">4.1.1.49</ecNumber>
    </recommendedName>
</protein>
<reference key="1">
    <citation type="journal article" date="2007" name="Proc. Natl. Acad. Sci. U.S.A.">
        <title>Genome and proteome of long-chain alkane degrading Geobacillus thermodenitrificans NG80-2 isolated from a deep-subsurface oil reservoir.</title>
        <authorList>
            <person name="Feng L."/>
            <person name="Wang W."/>
            <person name="Cheng J."/>
            <person name="Ren Y."/>
            <person name="Zhao G."/>
            <person name="Gao C."/>
            <person name="Tang Y."/>
            <person name="Liu X."/>
            <person name="Han W."/>
            <person name="Peng X."/>
            <person name="Liu R."/>
            <person name="Wang L."/>
        </authorList>
    </citation>
    <scope>NUCLEOTIDE SEQUENCE [LARGE SCALE GENOMIC DNA]</scope>
    <source>
        <strain>NG80-2</strain>
    </source>
</reference>
<sequence>MGIAKMTNKLSLLLQKPYVHHQLSVAELVEKVLHRNEGRLTHTGAVAVTTGKYTGRSPKDKYIVEEPSTKQNIDWGTVNQPMAPETFQKLYDKVLDYLMKKDELFVFKGFAGADPKARLPIQVVNEFAWHNLFVHQLFIRPSAEELADHEPQFTVICAPNFKADPAVDGTRSEAFIIISFEQRTVLIGGTEYAGEMKKSIFSVMNYLLPEQGILPMHCSANVGQEGDVALFFGLSGTGKTTLSTDPKRRLIGDDEHGWSSRGIFNIEGGCYAKCINLSREKEPQIFDAIGFGAVLENVILHDATRVPDYDDGTLTENTRAAYPLQAIKNIVDPSVAGHPSTIVFLTADAFGVLPPISKLTREQAMYHFLSGYTSKLAGTERGVTEPEATFSTCFGAPFLPRPAVEYAEMLGQKIAEHNVRVFLVNTGWTGGPYGVGSRMKLAYTRAMVQAAVEGELDNVETVQDPIFGLAIPAHVPGVPDDVLRPQNTWADKQAYEQKAKELAEKFRANFQKFAHIDPSIEKLGGPLV</sequence>